<reference key="1">
    <citation type="journal article" date="2004" name="Proc. Natl. Acad. Sci. U.S.A.">
        <title>Insights into the evolution of Yersinia pestis through whole-genome comparison with Yersinia pseudotuberculosis.</title>
        <authorList>
            <person name="Chain P.S.G."/>
            <person name="Carniel E."/>
            <person name="Larimer F.W."/>
            <person name="Lamerdin J."/>
            <person name="Stoutland P.O."/>
            <person name="Regala W.M."/>
            <person name="Georgescu A.M."/>
            <person name="Vergez L.M."/>
            <person name="Land M.L."/>
            <person name="Motin V.L."/>
            <person name="Brubaker R.R."/>
            <person name="Fowler J."/>
            <person name="Hinnebusch J."/>
            <person name="Marceau M."/>
            <person name="Medigue C."/>
            <person name="Simonet M."/>
            <person name="Chenal-Francisque V."/>
            <person name="Souza B."/>
            <person name="Dacheux D."/>
            <person name="Elliott J.M."/>
            <person name="Derbise A."/>
            <person name="Hauser L.J."/>
            <person name="Garcia E."/>
        </authorList>
    </citation>
    <scope>NUCLEOTIDE SEQUENCE [LARGE SCALE GENOMIC DNA]</scope>
    <source>
        <strain>IP32953</strain>
    </source>
</reference>
<dbReference type="EC" id="1.14.-.-" evidence="1"/>
<dbReference type="EMBL" id="BX936398">
    <property type="protein sequence ID" value="CAH21726.1"/>
    <property type="molecule type" value="Genomic_DNA"/>
</dbReference>
<dbReference type="RefSeq" id="WP_002211854.1">
    <property type="nucleotide sequence ID" value="NZ_CP009712.1"/>
</dbReference>
<dbReference type="SMR" id="Q669J6"/>
<dbReference type="KEGG" id="ypo:BZ17_4149"/>
<dbReference type="KEGG" id="yps:YPTB2488"/>
<dbReference type="PATRIC" id="fig|273123.14.peg.4370"/>
<dbReference type="Proteomes" id="UP000001011">
    <property type="component" value="Chromosome"/>
</dbReference>
<dbReference type="GO" id="GO:0016705">
    <property type="term" value="F:oxidoreductase activity, acting on paired donors, with incorporation or reduction of molecular oxygen"/>
    <property type="evidence" value="ECO:0007669"/>
    <property type="project" value="UniProtKB-UniRule"/>
</dbReference>
<dbReference type="GO" id="GO:0006400">
    <property type="term" value="P:tRNA modification"/>
    <property type="evidence" value="ECO:0007669"/>
    <property type="project" value="UniProtKB-UniRule"/>
</dbReference>
<dbReference type="CDD" id="cd01518">
    <property type="entry name" value="RHOD_YceA"/>
    <property type="match status" value="1"/>
</dbReference>
<dbReference type="Gene3D" id="3.30.70.100">
    <property type="match status" value="1"/>
</dbReference>
<dbReference type="Gene3D" id="3.40.250.10">
    <property type="entry name" value="Rhodanese-like domain"/>
    <property type="match status" value="1"/>
</dbReference>
<dbReference type="HAMAP" id="MF_00469">
    <property type="entry name" value="TrhO"/>
    <property type="match status" value="1"/>
</dbReference>
<dbReference type="InterPro" id="IPR001763">
    <property type="entry name" value="Rhodanese-like_dom"/>
</dbReference>
<dbReference type="InterPro" id="IPR036873">
    <property type="entry name" value="Rhodanese-like_dom_sf"/>
</dbReference>
<dbReference type="InterPro" id="IPR022111">
    <property type="entry name" value="Rhodanese_C"/>
</dbReference>
<dbReference type="InterPro" id="IPR020936">
    <property type="entry name" value="TrhO"/>
</dbReference>
<dbReference type="InterPro" id="IPR040503">
    <property type="entry name" value="TRHO_N"/>
</dbReference>
<dbReference type="NCBIfam" id="NF001133">
    <property type="entry name" value="PRK00142.1-1"/>
    <property type="match status" value="1"/>
</dbReference>
<dbReference type="PANTHER" id="PTHR43846:SF1">
    <property type="entry name" value="TRNA URIDINE(34) HYDROXYLASE"/>
    <property type="match status" value="1"/>
</dbReference>
<dbReference type="PANTHER" id="PTHR43846">
    <property type="entry name" value="UPF0176 PROTEIN YCEA"/>
    <property type="match status" value="1"/>
</dbReference>
<dbReference type="Pfam" id="PF00581">
    <property type="entry name" value="Rhodanese"/>
    <property type="match status" value="1"/>
</dbReference>
<dbReference type="Pfam" id="PF12368">
    <property type="entry name" value="Rhodanese_C"/>
    <property type="match status" value="1"/>
</dbReference>
<dbReference type="Pfam" id="PF17773">
    <property type="entry name" value="UPF0176_N"/>
    <property type="match status" value="1"/>
</dbReference>
<dbReference type="SMART" id="SM00450">
    <property type="entry name" value="RHOD"/>
    <property type="match status" value="1"/>
</dbReference>
<dbReference type="SUPFAM" id="SSF52821">
    <property type="entry name" value="Rhodanese/Cell cycle control phosphatase"/>
    <property type="match status" value="1"/>
</dbReference>
<dbReference type="PROSITE" id="PS50206">
    <property type="entry name" value="RHODANESE_3"/>
    <property type="match status" value="1"/>
</dbReference>
<evidence type="ECO:0000255" key="1">
    <source>
        <dbReference type="HAMAP-Rule" id="MF_00469"/>
    </source>
</evidence>
<evidence type="ECO:0000256" key="2">
    <source>
        <dbReference type="SAM" id="MobiDB-lite"/>
    </source>
</evidence>
<feature type="chain" id="PRO_0000161544" description="tRNA uridine(34) hydroxylase">
    <location>
        <begin position="1"/>
        <end position="355"/>
    </location>
</feature>
<feature type="domain" description="Rhodanese" evidence="1">
    <location>
        <begin position="146"/>
        <end position="240"/>
    </location>
</feature>
<feature type="region of interest" description="Disordered" evidence="2">
    <location>
        <begin position="333"/>
        <end position="355"/>
    </location>
</feature>
<feature type="active site" description="Cysteine persulfide intermediate" evidence="1">
    <location>
        <position position="200"/>
    </location>
</feature>
<protein>
    <recommendedName>
        <fullName evidence="1">tRNA uridine(34) hydroxylase</fullName>
        <ecNumber evidence="1">1.14.-.-</ecNumber>
    </recommendedName>
    <alternativeName>
        <fullName evidence="1">tRNA hydroxylation protein O</fullName>
    </alternativeName>
</protein>
<gene>
    <name evidence="1" type="primary">trhO</name>
    <name type="ordered locus">YPTB2488</name>
</gene>
<comment type="function">
    <text evidence="1">Catalyzes oxygen-dependent 5-hydroxyuridine (ho5U) modification at position 34 in tRNAs.</text>
</comment>
<comment type="catalytic activity">
    <reaction evidence="1">
        <text>uridine(34) in tRNA + AH2 + O2 = 5-hydroxyuridine(34) in tRNA + A + H2O</text>
        <dbReference type="Rhea" id="RHEA:64224"/>
        <dbReference type="Rhea" id="RHEA-COMP:11727"/>
        <dbReference type="Rhea" id="RHEA-COMP:13381"/>
        <dbReference type="ChEBI" id="CHEBI:13193"/>
        <dbReference type="ChEBI" id="CHEBI:15377"/>
        <dbReference type="ChEBI" id="CHEBI:15379"/>
        <dbReference type="ChEBI" id="CHEBI:17499"/>
        <dbReference type="ChEBI" id="CHEBI:65315"/>
        <dbReference type="ChEBI" id="CHEBI:136877"/>
    </reaction>
</comment>
<comment type="similarity">
    <text evidence="1">Belongs to the TrhO family.</text>
</comment>
<accession>Q669J6</accession>
<keyword id="KW-0560">Oxidoreductase</keyword>
<keyword id="KW-0819">tRNA processing</keyword>
<organism>
    <name type="scientific">Yersinia pseudotuberculosis serotype I (strain IP32953)</name>
    <dbReference type="NCBI Taxonomy" id="273123"/>
    <lineage>
        <taxon>Bacteria</taxon>
        <taxon>Pseudomonadati</taxon>
        <taxon>Pseudomonadota</taxon>
        <taxon>Gammaproteobacteria</taxon>
        <taxon>Enterobacterales</taxon>
        <taxon>Yersiniaceae</taxon>
        <taxon>Yersinia</taxon>
    </lineage>
</organism>
<proteinExistence type="inferred from homology"/>
<sequence length="355" mass="40550">MPVLHNRISNEELKARMLAETEPRTTVSFYKYFTLEDAKTFRDNLYSQFVKLGVFGRVYVAKEGINAQISVPANRYDEFKIALFASHPALDQVRLNVAHEDDGKSFWVLRLKVRERIVADGIDDDSFDPANIGHYLKADQVNQMIDDPDTLFVDMRNHYEYEVGHFENAIEVPSDTFREQLPMAVDMLQHDKEKNIVMYCTGGIRCEKASAYMLHNGFKNVYHVEGGIIEYARKAKEQGLPLKFIGKNFVFDERMGERISDDVIAHCHQCGTPCDAHTNCKNDGCHLLFIQCPVCAAKFEGCCSQICQEELKLPQEEQRSRRAGRENGIKIFNKSKGLLQATMHIPSPEKSADEK</sequence>
<name>TRHO_YERPS</name>